<keyword id="KW-0002">3D-structure</keyword>
<keyword id="KW-0963">Cytoplasm</keyword>
<keyword id="KW-0413">Isomerase</keyword>
<keyword id="KW-1185">Reference proteome</keyword>
<evidence type="ECO:0000255" key="1">
    <source>
        <dbReference type="HAMAP-Rule" id="MF_02051"/>
    </source>
</evidence>
<evidence type="ECO:0000269" key="2">
    <source>
    </source>
</evidence>
<evidence type="ECO:0000269" key="3">
    <source>
    </source>
</evidence>
<evidence type="ECO:0000269" key="4">
    <source>
    </source>
</evidence>
<evidence type="ECO:0000269" key="5">
    <source>
    </source>
</evidence>
<evidence type="ECO:0000303" key="6">
    <source>
    </source>
</evidence>
<gene>
    <name evidence="1" type="primary">lsrG</name>
    <name type="synonym">yneC</name>
    <name type="ordered locus">b1518</name>
    <name type="ordered locus">JW1511</name>
</gene>
<protein>
    <recommendedName>
        <fullName evidence="1">(4S)-4-hydroxy-5-phosphonooxypentane-2,3-dione isomerase</fullName>
        <ecNumber evidence="1 5">5.3.1.32</ecNumber>
    </recommendedName>
    <alternativeName>
        <fullName evidence="1">Autoinducer 2-degrading protein LsrG</fullName>
        <shortName evidence="1">AI-2-degrading protein LsrG</shortName>
    </alternativeName>
    <alternativeName>
        <fullName evidence="1 6">Phospho-(S)-4,5-dihydroxy-2,3-pentanedione isomerase</fullName>
    </alternativeName>
    <alternativeName>
        <fullName evidence="1">Phospho-AI-2 isomerase</fullName>
    </alternativeName>
</protein>
<reference key="1">
    <citation type="journal article" date="1997" name="Science">
        <title>The complete genome sequence of Escherichia coli K-12.</title>
        <authorList>
            <person name="Blattner F.R."/>
            <person name="Plunkett G. III"/>
            <person name="Bloch C.A."/>
            <person name="Perna N.T."/>
            <person name="Burland V."/>
            <person name="Riley M."/>
            <person name="Collado-Vides J."/>
            <person name="Glasner J.D."/>
            <person name="Rode C.K."/>
            <person name="Mayhew G.F."/>
            <person name="Gregor J."/>
            <person name="Davis N.W."/>
            <person name="Kirkpatrick H.A."/>
            <person name="Goeden M.A."/>
            <person name="Rose D.J."/>
            <person name="Mau B."/>
            <person name="Shao Y."/>
        </authorList>
    </citation>
    <scope>NUCLEOTIDE SEQUENCE [LARGE SCALE GENOMIC DNA]</scope>
    <source>
        <strain>K12 / MG1655 / ATCC 47076</strain>
    </source>
</reference>
<reference key="2">
    <citation type="journal article" date="2006" name="Mol. Syst. Biol.">
        <title>Highly accurate genome sequences of Escherichia coli K-12 strains MG1655 and W3110.</title>
        <authorList>
            <person name="Hayashi K."/>
            <person name="Morooka N."/>
            <person name="Yamamoto Y."/>
            <person name="Fujita K."/>
            <person name="Isono K."/>
            <person name="Choi S."/>
            <person name="Ohtsubo E."/>
            <person name="Baba T."/>
            <person name="Wanner B.L."/>
            <person name="Mori H."/>
            <person name="Horiuchi T."/>
        </authorList>
    </citation>
    <scope>NUCLEOTIDE SEQUENCE [LARGE SCALE GENOMIC DNA]</scope>
    <source>
        <strain>K12 / W3110 / ATCC 27325 / DSM 5911</strain>
    </source>
</reference>
<reference key="3">
    <citation type="journal article" date="2005" name="J. Bacteriol.">
        <title>Regulation of uptake and processing of the quorum-sensing autoinducer AI-2 in Escherichia coli.</title>
        <authorList>
            <person name="Xavier K.B."/>
            <person name="Bassler B.L."/>
        </authorList>
    </citation>
    <scope>INDUCTION</scope>
    <source>
        <strain>K12 / MG1655 / ATCC 47076</strain>
    </source>
</reference>
<reference key="4">
    <citation type="journal article" date="2005" name="J. Bacteriol.">
        <title>Cyclic AMP (cAMP) and cAMP receptor protein influence both synthesis and uptake of extracellular autoinducer 2 in Escherichia coli.</title>
        <authorList>
            <person name="Wang L."/>
            <person name="Hashimoto Y."/>
            <person name="Tsao C.-Y."/>
            <person name="Valdes J.J."/>
            <person name="Bentley W.E."/>
        </authorList>
    </citation>
    <scope>INDUCTION</scope>
    <source>
        <strain>K12 / W3110 / ATCC 27325 / DSM 5911</strain>
    </source>
</reference>
<reference key="5">
    <citation type="journal article" date="2007" name="ACS Chem. Biol.">
        <title>Phosphorylation and processing of the quorum-sensing molecule autoinducer-2 in enteric bacteria.</title>
        <authorList>
            <person name="Xavier K.B."/>
            <person name="Miller S.T."/>
            <person name="Lu W."/>
            <person name="Kim J.H."/>
            <person name="Rabinowitz J."/>
            <person name="Pelczer I."/>
            <person name="Semmelhack M.F."/>
            <person name="Bassler B.L."/>
        </authorList>
    </citation>
    <scope>FUNCTION IN PHOSPHO-AI-2 DEGRADATION</scope>
</reference>
<reference key="6">
    <citation type="journal article" date="2011" name="J. Biol. Chem.">
        <title>Processing the interspecies quorum-sensing signal autoinducer-2 (AI-2): characterization of phospho-(S)-4,5-dihydroxy-2,3-pentanedione isomerization by LsrG protein.</title>
        <authorList>
            <person name="Marques J.C."/>
            <person name="Lamosa P."/>
            <person name="Russell C."/>
            <person name="Ventura R."/>
            <person name="Maycock C."/>
            <person name="Semmelhack M.F."/>
            <person name="Miller S.T."/>
            <person name="Xavier K.B."/>
        </authorList>
    </citation>
    <scope>X-RAY CRYSTALLOGRAPHY (1.80 ANGSTROMS)</scope>
    <scope>FUNCTION</scope>
    <scope>CATALYTIC ACTIVITY</scope>
    <scope>SUBUNIT</scope>
    <scope>MUTAGENESIS OF ASN-25; GLU-54; HIS-65 AND HIS-70</scope>
    <source>
        <strain>K12 / MG1655 / ATCC 47076</strain>
    </source>
</reference>
<dbReference type="EC" id="5.3.1.32" evidence="1 5"/>
<dbReference type="EMBL" id="U00096">
    <property type="protein sequence ID" value="AAC74591.1"/>
    <property type="molecule type" value="Genomic_DNA"/>
</dbReference>
<dbReference type="EMBL" id="AP009048">
    <property type="protein sequence ID" value="BAE76458.1"/>
    <property type="molecule type" value="Genomic_DNA"/>
</dbReference>
<dbReference type="PIR" id="A64906">
    <property type="entry name" value="A64906"/>
</dbReference>
<dbReference type="RefSeq" id="NP_416035.1">
    <property type="nucleotide sequence ID" value="NC_000913.3"/>
</dbReference>
<dbReference type="RefSeq" id="WP_000558527.1">
    <property type="nucleotide sequence ID" value="NZ_STEB01000003.1"/>
</dbReference>
<dbReference type="PDB" id="3QMQ">
    <property type="method" value="X-ray"/>
    <property type="resolution" value="1.80 A"/>
    <property type="chains" value="A/B/C/D=1-96"/>
</dbReference>
<dbReference type="PDBsum" id="3QMQ"/>
<dbReference type="SMR" id="P64461"/>
<dbReference type="BioGRID" id="4260228">
    <property type="interactions" value="16"/>
</dbReference>
<dbReference type="BioGRID" id="850433">
    <property type="interactions" value="1"/>
</dbReference>
<dbReference type="DIP" id="DIP-47853N"/>
<dbReference type="FunCoup" id="P64461">
    <property type="interactions" value="113"/>
</dbReference>
<dbReference type="IntAct" id="P64461">
    <property type="interactions" value="6"/>
</dbReference>
<dbReference type="STRING" id="511145.b1518"/>
<dbReference type="jPOST" id="P64461"/>
<dbReference type="PaxDb" id="511145-b1518"/>
<dbReference type="EnsemblBacteria" id="AAC74591">
    <property type="protein sequence ID" value="AAC74591"/>
    <property type="gene ID" value="b1518"/>
</dbReference>
<dbReference type="GeneID" id="75057398"/>
<dbReference type="GeneID" id="946073"/>
<dbReference type="KEGG" id="ecj:JW1511"/>
<dbReference type="KEGG" id="eco:b1518"/>
<dbReference type="KEGG" id="ecoc:C3026_08775"/>
<dbReference type="PATRIC" id="fig|1411691.4.peg.749"/>
<dbReference type="EchoBASE" id="EB3572"/>
<dbReference type="eggNOG" id="COG1359">
    <property type="taxonomic scope" value="Bacteria"/>
</dbReference>
<dbReference type="HOGENOM" id="CLU_131496_3_0_6"/>
<dbReference type="InParanoid" id="P64461"/>
<dbReference type="OMA" id="KETAHYQ"/>
<dbReference type="OrthoDB" id="9812754at2"/>
<dbReference type="PhylomeDB" id="P64461"/>
<dbReference type="BioCyc" id="EcoCyc:G6805-MONOMER"/>
<dbReference type="BioCyc" id="MetaCyc:G6805-MONOMER"/>
<dbReference type="PHI-base" id="PHI:9997"/>
<dbReference type="PRO" id="PR:P64461"/>
<dbReference type="Proteomes" id="UP000000625">
    <property type="component" value="Chromosome"/>
</dbReference>
<dbReference type="GO" id="GO:0005829">
    <property type="term" value="C:cytosol"/>
    <property type="evidence" value="ECO:0000318"/>
    <property type="project" value="GO_Central"/>
</dbReference>
<dbReference type="GO" id="GO:0002952">
    <property type="term" value="F:(4S)-4-hydroxy-5-phosphonooxypentane-2,3-dione isomerase activity"/>
    <property type="evidence" value="ECO:0000314"/>
    <property type="project" value="EcoCyc"/>
</dbReference>
<dbReference type="GO" id="GO:0016853">
    <property type="term" value="F:isomerase activity"/>
    <property type="evidence" value="ECO:0000314"/>
    <property type="project" value="EcoCyc"/>
</dbReference>
<dbReference type="GO" id="GO:0016491">
    <property type="term" value="F:oxidoreductase activity"/>
    <property type="evidence" value="ECO:0000318"/>
    <property type="project" value="GO_Central"/>
</dbReference>
<dbReference type="GO" id="GO:0009372">
    <property type="term" value="P:quorum sensing"/>
    <property type="evidence" value="ECO:0000305"/>
    <property type="project" value="EcoCyc"/>
</dbReference>
<dbReference type="FunFam" id="3.30.70.100:FF:000016">
    <property type="entry name" value="(4S)-4-hydroxy-5-phosphonooxypentane-2,3-dione isomerase"/>
    <property type="match status" value="1"/>
</dbReference>
<dbReference type="Gene3D" id="3.30.70.100">
    <property type="match status" value="1"/>
</dbReference>
<dbReference type="HAMAP" id="MF_02051">
    <property type="entry name" value="LsrG"/>
    <property type="match status" value="1"/>
</dbReference>
<dbReference type="InterPro" id="IPR007138">
    <property type="entry name" value="ABM_dom"/>
</dbReference>
<dbReference type="InterPro" id="IPR050744">
    <property type="entry name" value="AI-2_Isomerase_LsrG"/>
</dbReference>
<dbReference type="InterPro" id="IPR011008">
    <property type="entry name" value="Dimeric_a/b-barrel"/>
</dbReference>
<dbReference type="InterPro" id="IPR033672">
    <property type="entry name" value="LsrG"/>
</dbReference>
<dbReference type="NCBIfam" id="NF007791">
    <property type="entry name" value="PRK10486.1"/>
    <property type="match status" value="1"/>
</dbReference>
<dbReference type="PANTHER" id="PTHR33336:SF1">
    <property type="entry name" value="(4S)-4-HYDROXY-5-PHOSPHONOOXYPENTANE-2,3-DIONE ISOMERASE"/>
    <property type="match status" value="1"/>
</dbReference>
<dbReference type="PANTHER" id="PTHR33336">
    <property type="entry name" value="QUINOL MONOOXYGENASE YGIN-RELATED"/>
    <property type="match status" value="1"/>
</dbReference>
<dbReference type="Pfam" id="PF03992">
    <property type="entry name" value="ABM"/>
    <property type="match status" value="1"/>
</dbReference>
<dbReference type="SUPFAM" id="SSF54909">
    <property type="entry name" value="Dimeric alpha+beta barrel"/>
    <property type="match status" value="1"/>
</dbReference>
<dbReference type="PROSITE" id="PS51725">
    <property type="entry name" value="ABM"/>
    <property type="match status" value="1"/>
</dbReference>
<feature type="chain" id="PRO_0000168947" description="(4S)-4-hydroxy-5-phosphonooxypentane-2,3-dione isomerase">
    <location>
        <begin position="1"/>
        <end position="96"/>
    </location>
</feature>
<feature type="domain" description="ABM" evidence="1">
    <location>
        <begin position="2"/>
        <end position="91"/>
    </location>
</feature>
<feature type="mutagenesis site" description="3-fold lower specific activity." evidence="5">
    <original>N</original>
    <variation>A</variation>
    <location>
        <position position="25"/>
    </location>
</feature>
<feature type="mutagenesis site" description="No activity." evidence="5">
    <original>E</original>
    <variation>A</variation>
    <location>
        <position position="54"/>
    </location>
</feature>
<feature type="mutagenesis site" description="No activity." evidence="5">
    <original>H</original>
    <variation>A</variation>
    <location>
        <position position="65"/>
    </location>
</feature>
<feature type="mutagenesis site" description="100-fold lower specific activity." evidence="5">
    <original>H</original>
    <variation>A</variation>
    <location>
        <position position="70"/>
    </location>
</feature>
<proteinExistence type="evidence at protein level"/>
<accession>P64461</accession>
<accession>P76144</accession>
<accession>Q2MB98</accession>
<name>LSRG_ECOLI</name>
<comment type="function">
    <text evidence="1 4 5">Involved in the degradation of phospho-AI-2, thereby terminating induction of the lsr operon and closing the AI-2 signaling cycle. Catalyzes the conversion of (4S)-4-hydroxy-5-phosphonooxypentane-2,3-dione (P-DPD) to 3-hydroxy-5-phosphonooxypentane-2,4-dione (P-HPD).</text>
</comment>
<comment type="catalytic activity">
    <reaction evidence="1 5">
        <text>(2S)-2-hydroxy-3,4-dioxopentyl phosphate = 3-hydroxy-2,4-dioxopentyl phosphate</text>
        <dbReference type="Rhea" id="RHEA:44360"/>
        <dbReference type="ChEBI" id="CHEBI:71677"/>
        <dbReference type="ChEBI" id="CHEBI:84359"/>
        <dbReference type="EC" id="5.3.1.32"/>
    </reaction>
</comment>
<comment type="subunit">
    <text evidence="1 5">Homodimer.</text>
</comment>
<comment type="subcellular location">
    <subcellularLocation>
        <location evidence="1">Cytoplasm</location>
    </subcellularLocation>
</comment>
<comment type="induction">
    <text evidence="2 3">In the absence of AI-2, repressed by LsrR. Induced by AI-2, via release of the LsrR repressor. In the absence of glucose, induced by cAMP-CRP by direct binding to the upstream region of the lsr promoter.</text>
</comment>
<comment type="similarity">
    <text evidence="1">Belongs to the LsrG family.</text>
</comment>
<organism>
    <name type="scientific">Escherichia coli (strain K12)</name>
    <dbReference type="NCBI Taxonomy" id="83333"/>
    <lineage>
        <taxon>Bacteria</taxon>
        <taxon>Pseudomonadati</taxon>
        <taxon>Pseudomonadota</taxon>
        <taxon>Gammaproteobacteria</taxon>
        <taxon>Enterobacterales</taxon>
        <taxon>Enterobacteriaceae</taxon>
        <taxon>Escherichia</taxon>
    </lineage>
</organism>
<sequence length="96" mass="11255">MHVTLVEINVHEDKVDEFIEVFRQNHLGSVQEEGNLRFDVLQDPEVNSRFYIYEAYKDEDAVAFHKTTPHYKTCVAKLESLMTGPRKKRLFNGLMP</sequence>